<reference key="1">
    <citation type="journal article" date="2015" name="Genome Announc.">
        <title>Complete genome sequence of Anaeromyxobacter sp. Fw109-5, an anaerobic, metal-reducing bacterium isolated from a contaminated subsurface environment.</title>
        <authorList>
            <person name="Hwang C."/>
            <person name="Copeland A."/>
            <person name="Lucas S."/>
            <person name="Lapidus A."/>
            <person name="Barry K."/>
            <person name="Glavina Del Rio T."/>
            <person name="Dalin E."/>
            <person name="Tice H."/>
            <person name="Pitluck S."/>
            <person name="Sims D."/>
            <person name="Brettin T."/>
            <person name="Bruce D.C."/>
            <person name="Detter J.C."/>
            <person name="Han C.S."/>
            <person name="Schmutz J."/>
            <person name="Larimer F.W."/>
            <person name="Land M.L."/>
            <person name="Hauser L.J."/>
            <person name="Kyrpides N."/>
            <person name="Lykidis A."/>
            <person name="Richardson P."/>
            <person name="Belieav A."/>
            <person name="Sanford R.A."/>
            <person name="Loeffler F.E."/>
            <person name="Fields M.W."/>
        </authorList>
    </citation>
    <scope>NUCLEOTIDE SEQUENCE [LARGE SCALE GENOMIC DNA]</scope>
    <source>
        <strain>Fw109-5</strain>
    </source>
</reference>
<keyword id="KW-0963">Cytoplasm</keyword>
<keyword id="KW-0238">DNA-binding</keyword>
<keyword id="KW-1185">Reference proteome</keyword>
<keyword id="KW-0677">Repeat</keyword>
<keyword id="KW-0804">Transcription</keyword>
<keyword id="KW-0805">Transcription regulation</keyword>
<proteinExistence type="inferred from homology"/>
<name>MRAZ_ANADF</name>
<accession>A7HH57</accession>
<gene>
    <name evidence="1" type="primary">mraZ</name>
    <name type="ordered locus">Anae109_3874</name>
</gene>
<sequence length="145" mass="16263">MFFGTFNHAIDAKGRTSLPVKFRESLAAAGEPRIVLMQYPHWRAVQALPQSVWNELVKKVMDASPLDARTQRSVLKFVSSAHEVDLDANGRVLVPPALREWAGLQKDVVWVGMGRTIHLYDKAAYETQVAEEIPSDQVVDFFGKV</sequence>
<dbReference type="EMBL" id="CP000769">
    <property type="protein sequence ID" value="ABS28053.1"/>
    <property type="molecule type" value="Genomic_DNA"/>
</dbReference>
<dbReference type="RefSeq" id="WP_012098687.1">
    <property type="nucleotide sequence ID" value="NC_009675.1"/>
</dbReference>
<dbReference type="SMR" id="A7HH57"/>
<dbReference type="STRING" id="404589.Anae109_3874"/>
<dbReference type="KEGG" id="afw:Anae109_3874"/>
<dbReference type="eggNOG" id="COG2001">
    <property type="taxonomic scope" value="Bacteria"/>
</dbReference>
<dbReference type="HOGENOM" id="CLU_107907_0_5_7"/>
<dbReference type="OrthoDB" id="9807753at2"/>
<dbReference type="Proteomes" id="UP000006382">
    <property type="component" value="Chromosome"/>
</dbReference>
<dbReference type="GO" id="GO:0005737">
    <property type="term" value="C:cytoplasm"/>
    <property type="evidence" value="ECO:0007669"/>
    <property type="project" value="UniProtKB-UniRule"/>
</dbReference>
<dbReference type="GO" id="GO:0009295">
    <property type="term" value="C:nucleoid"/>
    <property type="evidence" value="ECO:0007669"/>
    <property type="project" value="UniProtKB-SubCell"/>
</dbReference>
<dbReference type="GO" id="GO:0003700">
    <property type="term" value="F:DNA-binding transcription factor activity"/>
    <property type="evidence" value="ECO:0007669"/>
    <property type="project" value="UniProtKB-UniRule"/>
</dbReference>
<dbReference type="GO" id="GO:0000976">
    <property type="term" value="F:transcription cis-regulatory region binding"/>
    <property type="evidence" value="ECO:0007669"/>
    <property type="project" value="TreeGrafter"/>
</dbReference>
<dbReference type="GO" id="GO:2000143">
    <property type="term" value="P:negative regulation of DNA-templated transcription initiation"/>
    <property type="evidence" value="ECO:0007669"/>
    <property type="project" value="TreeGrafter"/>
</dbReference>
<dbReference type="CDD" id="cd16321">
    <property type="entry name" value="MraZ_C"/>
    <property type="match status" value="1"/>
</dbReference>
<dbReference type="CDD" id="cd16320">
    <property type="entry name" value="MraZ_N"/>
    <property type="match status" value="1"/>
</dbReference>
<dbReference type="Gene3D" id="3.40.1550.20">
    <property type="entry name" value="Transcriptional regulator MraZ domain"/>
    <property type="match status" value="1"/>
</dbReference>
<dbReference type="HAMAP" id="MF_01008">
    <property type="entry name" value="MraZ"/>
    <property type="match status" value="1"/>
</dbReference>
<dbReference type="InterPro" id="IPR003444">
    <property type="entry name" value="MraZ"/>
</dbReference>
<dbReference type="InterPro" id="IPR035644">
    <property type="entry name" value="MraZ_C"/>
</dbReference>
<dbReference type="InterPro" id="IPR020603">
    <property type="entry name" value="MraZ_dom"/>
</dbReference>
<dbReference type="InterPro" id="IPR035642">
    <property type="entry name" value="MraZ_N"/>
</dbReference>
<dbReference type="InterPro" id="IPR038619">
    <property type="entry name" value="MraZ_sf"/>
</dbReference>
<dbReference type="InterPro" id="IPR007159">
    <property type="entry name" value="SpoVT-AbrB_dom"/>
</dbReference>
<dbReference type="InterPro" id="IPR037914">
    <property type="entry name" value="SpoVT-AbrB_sf"/>
</dbReference>
<dbReference type="PANTHER" id="PTHR34701">
    <property type="entry name" value="TRANSCRIPTIONAL REGULATOR MRAZ"/>
    <property type="match status" value="1"/>
</dbReference>
<dbReference type="PANTHER" id="PTHR34701:SF1">
    <property type="entry name" value="TRANSCRIPTIONAL REGULATOR MRAZ"/>
    <property type="match status" value="1"/>
</dbReference>
<dbReference type="Pfam" id="PF02381">
    <property type="entry name" value="MraZ"/>
    <property type="match status" value="1"/>
</dbReference>
<dbReference type="SUPFAM" id="SSF89447">
    <property type="entry name" value="AbrB/MazE/MraZ-like"/>
    <property type="match status" value="1"/>
</dbReference>
<dbReference type="PROSITE" id="PS51740">
    <property type="entry name" value="SPOVT_ABRB"/>
    <property type="match status" value="2"/>
</dbReference>
<feature type="chain" id="PRO_1000062845" description="Transcriptional regulator MraZ">
    <location>
        <begin position="1"/>
        <end position="145"/>
    </location>
</feature>
<feature type="domain" description="SpoVT-AbrB 1" evidence="2">
    <location>
        <begin position="5"/>
        <end position="50"/>
    </location>
</feature>
<feature type="domain" description="SpoVT-AbrB 2" evidence="2">
    <location>
        <begin position="81"/>
        <end position="124"/>
    </location>
</feature>
<comment type="subunit">
    <text evidence="1">Forms oligomers.</text>
</comment>
<comment type="subcellular location">
    <subcellularLocation>
        <location evidence="1">Cytoplasm</location>
        <location evidence="1">Nucleoid</location>
    </subcellularLocation>
</comment>
<comment type="similarity">
    <text evidence="1">Belongs to the MraZ family.</text>
</comment>
<evidence type="ECO:0000255" key="1">
    <source>
        <dbReference type="HAMAP-Rule" id="MF_01008"/>
    </source>
</evidence>
<evidence type="ECO:0000255" key="2">
    <source>
        <dbReference type="PROSITE-ProRule" id="PRU01076"/>
    </source>
</evidence>
<organism>
    <name type="scientific">Anaeromyxobacter sp. (strain Fw109-5)</name>
    <dbReference type="NCBI Taxonomy" id="404589"/>
    <lineage>
        <taxon>Bacteria</taxon>
        <taxon>Pseudomonadati</taxon>
        <taxon>Myxococcota</taxon>
        <taxon>Myxococcia</taxon>
        <taxon>Myxococcales</taxon>
        <taxon>Cystobacterineae</taxon>
        <taxon>Anaeromyxobacteraceae</taxon>
        <taxon>Anaeromyxobacter</taxon>
    </lineage>
</organism>
<protein>
    <recommendedName>
        <fullName>Transcriptional regulator MraZ</fullName>
    </recommendedName>
</protein>